<reference key="1">
    <citation type="journal article" date="2007" name="Nat. Biotechnol.">
        <title>Genome sequence and identification of candidate vaccine antigens from the animal pathogen Dichelobacter nodosus.</title>
        <authorList>
            <person name="Myers G.S.A."/>
            <person name="Parker D."/>
            <person name="Al-Hasani K."/>
            <person name="Kennan R.M."/>
            <person name="Seemann T."/>
            <person name="Ren Q."/>
            <person name="Badger J.H."/>
            <person name="Selengut J.D."/>
            <person name="Deboy R.T."/>
            <person name="Tettelin H."/>
            <person name="Boyce J.D."/>
            <person name="McCarl V.P."/>
            <person name="Han X."/>
            <person name="Nelson W.C."/>
            <person name="Madupu R."/>
            <person name="Mohamoud Y."/>
            <person name="Holley T."/>
            <person name="Fedorova N."/>
            <person name="Khouri H."/>
            <person name="Bottomley S.P."/>
            <person name="Whittington R.J."/>
            <person name="Adler B."/>
            <person name="Songer J.G."/>
            <person name="Rood J.I."/>
            <person name="Paulsen I.T."/>
        </authorList>
    </citation>
    <scope>NUCLEOTIDE SEQUENCE [LARGE SCALE GENOMIC DNA]</scope>
    <source>
        <strain>VCS1703A</strain>
    </source>
</reference>
<sequence length="120" mass="13547">MSKIIDILEKEQIRTDLPEFGPGDTLVVQVKIREGNNERLQAFEGICIAKRNRGIGSSFTVRKISHGEGVERVFQTHSPLVSSVTVKRRGDVRRAKLYYLRALQGKAARIKEKLEKKASV</sequence>
<evidence type="ECO:0000255" key="1">
    <source>
        <dbReference type="HAMAP-Rule" id="MF_00402"/>
    </source>
</evidence>
<evidence type="ECO:0000305" key="2"/>
<feature type="chain" id="PRO_1000049670" description="Large ribosomal subunit protein bL19">
    <location>
        <begin position="1"/>
        <end position="120"/>
    </location>
</feature>
<gene>
    <name evidence="1" type="primary">rplS</name>
    <name type="ordered locus">DNO_1010</name>
</gene>
<organism>
    <name type="scientific">Dichelobacter nodosus (strain VCS1703A)</name>
    <dbReference type="NCBI Taxonomy" id="246195"/>
    <lineage>
        <taxon>Bacteria</taxon>
        <taxon>Pseudomonadati</taxon>
        <taxon>Pseudomonadota</taxon>
        <taxon>Gammaproteobacteria</taxon>
        <taxon>Cardiobacteriales</taxon>
        <taxon>Cardiobacteriaceae</taxon>
        <taxon>Dichelobacter</taxon>
    </lineage>
</organism>
<accession>A5EXX6</accession>
<name>RL19_DICNV</name>
<keyword id="KW-1185">Reference proteome</keyword>
<keyword id="KW-0687">Ribonucleoprotein</keyword>
<keyword id="KW-0689">Ribosomal protein</keyword>
<proteinExistence type="inferred from homology"/>
<dbReference type="EMBL" id="CP000513">
    <property type="protein sequence ID" value="ABQ14050.1"/>
    <property type="molecule type" value="Genomic_DNA"/>
</dbReference>
<dbReference type="RefSeq" id="WP_012031322.1">
    <property type="nucleotide sequence ID" value="NC_009446.1"/>
</dbReference>
<dbReference type="SMR" id="A5EXX6"/>
<dbReference type="STRING" id="246195.DNO_1010"/>
<dbReference type="KEGG" id="dno:DNO_1010"/>
<dbReference type="eggNOG" id="COG0335">
    <property type="taxonomic scope" value="Bacteria"/>
</dbReference>
<dbReference type="HOGENOM" id="CLU_103507_2_1_6"/>
<dbReference type="OrthoDB" id="9803541at2"/>
<dbReference type="Proteomes" id="UP000000248">
    <property type="component" value="Chromosome"/>
</dbReference>
<dbReference type="GO" id="GO:0022625">
    <property type="term" value="C:cytosolic large ribosomal subunit"/>
    <property type="evidence" value="ECO:0007669"/>
    <property type="project" value="TreeGrafter"/>
</dbReference>
<dbReference type="GO" id="GO:0003735">
    <property type="term" value="F:structural constituent of ribosome"/>
    <property type="evidence" value="ECO:0007669"/>
    <property type="project" value="InterPro"/>
</dbReference>
<dbReference type="GO" id="GO:0006412">
    <property type="term" value="P:translation"/>
    <property type="evidence" value="ECO:0007669"/>
    <property type="project" value="UniProtKB-UniRule"/>
</dbReference>
<dbReference type="FunFam" id="2.30.30.790:FF:000001">
    <property type="entry name" value="50S ribosomal protein L19"/>
    <property type="match status" value="1"/>
</dbReference>
<dbReference type="Gene3D" id="2.30.30.790">
    <property type="match status" value="1"/>
</dbReference>
<dbReference type="HAMAP" id="MF_00402">
    <property type="entry name" value="Ribosomal_bL19"/>
    <property type="match status" value="1"/>
</dbReference>
<dbReference type="InterPro" id="IPR001857">
    <property type="entry name" value="Ribosomal_bL19"/>
</dbReference>
<dbReference type="InterPro" id="IPR018257">
    <property type="entry name" value="Ribosomal_bL19_CS"/>
</dbReference>
<dbReference type="InterPro" id="IPR038657">
    <property type="entry name" value="Ribosomal_bL19_sf"/>
</dbReference>
<dbReference type="InterPro" id="IPR008991">
    <property type="entry name" value="Translation_prot_SH3-like_sf"/>
</dbReference>
<dbReference type="NCBIfam" id="TIGR01024">
    <property type="entry name" value="rplS_bact"/>
    <property type="match status" value="1"/>
</dbReference>
<dbReference type="PANTHER" id="PTHR15680:SF9">
    <property type="entry name" value="LARGE RIBOSOMAL SUBUNIT PROTEIN BL19M"/>
    <property type="match status" value="1"/>
</dbReference>
<dbReference type="PANTHER" id="PTHR15680">
    <property type="entry name" value="RIBOSOMAL PROTEIN L19"/>
    <property type="match status" value="1"/>
</dbReference>
<dbReference type="Pfam" id="PF01245">
    <property type="entry name" value="Ribosomal_L19"/>
    <property type="match status" value="1"/>
</dbReference>
<dbReference type="PIRSF" id="PIRSF002191">
    <property type="entry name" value="Ribosomal_L19"/>
    <property type="match status" value="1"/>
</dbReference>
<dbReference type="PRINTS" id="PR00061">
    <property type="entry name" value="RIBOSOMALL19"/>
</dbReference>
<dbReference type="SUPFAM" id="SSF50104">
    <property type="entry name" value="Translation proteins SH3-like domain"/>
    <property type="match status" value="1"/>
</dbReference>
<dbReference type="PROSITE" id="PS01015">
    <property type="entry name" value="RIBOSOMAL_L19"/>
    <property type="match status" value="1"/>
</dbReference>
<protein>
    <recommendedName>
        <fullName evidence="1">Large ribosomal subunit protein bL19</fullName>
    </recommendedName>
    <alternativeName>
        <fullName evidence="2">50S ribosomal protein L19</fullName>
    </alternativeName>
</protein>
<comment type="function">
    <text evidence="1">This protein is located at the 30S-50S ribosomal subunit interface and may play a role in the structure and function of the aminoacyl-tRNA binding site.</text>
</comment>
<comment type="similarity">
    <text evidence="1">Belongs to the bacterial ribosomal protein bL19 family.</text>
</comment>